<organism>
    <name type="scientific">Brucella melitensis biotype 1 (strain ATCC 23456 / CCUG 17765 / NCTC 10094 / 16M)</name>
    <dbReference type="NCBI Taxonomy" id="224914"/>
    <lineage>
        <taxon>Bacteria</taxon>
        <taxon>Pseudomonadati</taxon>
        <taxon>Pseudomonadota</taxon>
        <taxon>Alphaproteobacteria</taxon>
        <taxon>Hyphomicrobiales</taxon>
        <taxon>Brucellaceae</taxon>
        <taxon>Brucella/Ochrobactrum group</taxon>
        <taxon>Brucella</taxon>
    </lineage>
</organism>
<gene>
    <name evidence="1" type="primary">nuoH</name>
    <name type="ordered locus">BMEI1151</name>
</gene>
<reference key="1">
    <citation type="journal article" date="2002" name="Proc. Natl. Acad. Sci. U.S.A.">
        <title>The genome sequence of the facultative intracellular pathogen Brucella melitensis.</title>
        <authorList>
            <person name="DelVecchio V.G."/>
            <person name="Kapatral V."/>
            <person name="Redkar R.J."/>
            <person name="Patra G."/>
            <person name="Mujer C."/>
            <person name="Los T."/>
            <person name="Ivanova N."/>
            <person name="Anderson I."/>
            <person name="Bhattacharyya A."/>
            <person name="Lykidis A."/>
            <person name="Reznik G."/>
            <person name="Jablonski L."/>
            <person name="Larsen N."/>
            <person name="D'Souza M."/>
            <person name="Bernal A."/>
            <person name="Mazur M."/>
            <person name="Goltsman E."/>
            <person name="Selkov E."/>
            <person name="Elzer P.H."/>
            <person name="Hagius S."/>
            <person name="O'Callaghan D."/>
            <person name="Letesson J.-J."/>
            <person name="Haselkorn R."/>
            <person name="Kyrpides N.C."/>
            <person name="Overbeek R."/>
        </authorList>
    </citation>
    <scope>NUCLEOTIDE SEQUENCE [LARGE SCALE GENOMIC DNA]</scope>
    <source>
        <strain>ATCC 23456 / CCUG 17765 / NCTC 10094 / 16M</strain>
    </source>
</reference>
<comment type="function">
    <text evidence="1">NDH-1 shuttles electrons from NADH, via FMN and iron-sulfur (Fe-S) centers, to quinones in the respiratory chain. The immediate electron acceptor for the enzyme in this species is believed to be ubiquinone. Couples the redox reaction to proton translocation (for every two electrons transferred, four hydrogen ions are translocated across the cytoplasmic membrane), and thus conserves the redox energy in a proton gradient. This subunit may bind ubiquinone.</text>
</comment>
<comment type="catalytic activity">
    <reaction evidence="1">
        <text>a quinone + NADH + 5 H(+)(in) = a quinol + NAD(+) + 4 H(+)(out)</text>
        <dbReference type="Rhea" id="RHEA:57888"/>
        <dbReference type="ChEBI" id="CHEBI:15378"/>
        <dbReference type="ChEBI" id="CHEBI:24646"/>
        <dbReference type="ChEBI" id="CHEBI:57540"/>
        <dbReference type="ChEBI" id="CHEBI:57945"/>
        <dbReference type="ChEBI" id="CHEBI:132124"/>
    </reaction>
</comment>
<comment type="subunit">
    <text evidence="1">NDH-1 is composed of 14 different subunits. Subunits NuoA, H, J, K, L, M, N constitute the membrane sector of the complex.</text>
</comment>
<comment type="subcellular location">
    <subcellularLocation>
        <location evidence="1">Cell inner membrane</location>
        <topology evidence="1">Multi-pass membrane protein</topology>
    </subcellularLocation>
</comment>
<comment type="similarity">
    <text evidence="1">Belongs to the complex I subunit 1 family.</text>
</comment>
<comment type="sequence caution" evidence="2">
    <conflict type="erroneous initiation">
        <sequence resource="EMBL-CDS" id="AAL52332"/>
    </conflict>
</comment>
<proteinExistence type="inferred from homology"/>
<protein>
    <recommendedName>
        <fullName evidence="1">NADH-quinone oxidoreductase subunit H</fullName>
        <ecNumber evidence="1">7.1.1.-</ecNumber>
    </recommendedName>
    <alternativeName>
        <fullName evidence="1">NADH dehydrogenase I subunit H</fullName>
    </alternativeName>
    <alternativeName>
        <fullName evidence="1">NDH-1 subunit H</fullName>
    </alternativeName>
</protein>
<accession>Q8YGK7</accession>
<keyword id="KW-0997">Cell inner membrane</keyword>
<keyword id="KW-1003">Cell membrane</keyword>
<keyword id="KW-0472">Membrane</keyword>
<keyword id="KW-0520">NAD</keyword>
<keyword id="KW-0874">Quinone</keyword>
<keyword id="KW-1278">Translocase</keyword>
<keyword id="KW-0812">Transmembrane</keyword>
<keyword id="KW-1133">Transmembrane helix</keyword>
<keyword id="KW-0830">Ubiquinone</keyword>
<name>NUOH_BRUME</name>
<sequence length="347" mass="38573">MEGIFAAYVLPALIIALKSVVLLVVLLIVVAYLLYADRKIWAAVQLRRGPNVVGPWGLFQRFADLLKFVFKEPIIPSGANKGVFLLAPFIFAVLAMATWAVIPVNEGWAVANINVGILYIFAISSLEVYGVIMGGWASNSKYPFLGALRSAAQMVSYEVSIGFVIVTVLLTVGSLNLTDIVLSQNTGLGTMLGLPASFLDWNWLCLFPMFVVFFISALAETNRPPFDLVEAESELVAGHMIEYSSTPFLLFFLGEYVAITLMCALMTVLFLGGWLPPVDVWFLSWVPGIIWFMLKLCFCFFLFAMVKAFVPRYRYDQLMRLGWKVFLPISLFMVVATATFLKVFGLA</sequence>
<dbReference type="EC" id="7.1.1.-" evidence="1"/>
<dbReference type="EMBL" id="AE008917">
    <property type="protein sequence ID" value="AAL52332.1"/>
    <property type="status" value="ALT_INIT"/>
    <property type="molecule type" value="Genomic_DNA"/>
</dbReference>
<dbReference type="PIR" id="AI3395">
    <property type="entry name" value="AI3395"/>
</dbReference>
<dbReference type="RefSeq" id="WP_011005242.1">
    <property type="nucleotide sequence ID" value="NC_003317.1"/>
</dbReference>
<dbReference type="SMR" id="Q8YGK7"/>
<dbReference type="GeneID" id="29593985"/>
<dbReference type="KEGG" id="bme:BMEI1151"/>
<dbReference type="eggNOG" id="COG1005">
    <property type="taxonomic scope" value="Bacteria"/>
</dbReference>
<dbReference type="PhylomeDB" id="Q8YGK7"/>
<dbReference type="Proteomes" id="UP000000419">
    <property type="component" value="Chromosome I"/>
</dbReference>
<dbReference type="GO" id="GO:0005886">
    <property type="term" value="C:plasma membrane"/>
    <property type="evidence" value="ECO:0007669"/>
    <property type="project" value="UniProtKB-SubCell"/>
</dbReference>
<dbReference type="GO" id="GO:0003954">
    <property type="term" value="F:NADH dehydrogenase activity"/>
    <property type="evidence" value="ECO:0007669"/>
    <property type="project" value="TreeGrafter"/>
</dbReference>
<dbReference type="GO" id="GO:0016655">
    <property type="term" value="F:oxidoreductase activity, acting on NAD(P)H, quinone or similar compound as acceptor"/>
    <property type="evidence" value="ECO:0007669"/>
    <property type="project" value="UniProtKB-UniRule"/>
</dbReference>
<dbReference type="GO" id="GO:0048038">
    <property type="term" value="F:quinone binding"/>
    <property type="evidence" value="ECO:0007669"/>
    <property type="project" value="UniProtKB-KW"/>
</dbReference>
<dbReference type="GO" id="GO:0009060">
    <property type="term" value="P:aerobic respiration"/>
    <property type="evidence" value="ECO:0007669"/>
    <property type="project" value="TreeGrafter"/>
</dbReference>
<dbReference type="HAMAP" id="MF_01350">
    <property type="entry name" value="NDH1_NuoH"/>
    <property type="match status" value="1"/>
</dbReference>
<dbReference type="InterPro" id="IPR001694">
    <property type="entry name" value="NADH_UbQ_OxRdtase_su1/FPO"/>
</dbReference>
<dbReference type="InterPro" id="IPR018086">
    <property type="entry name" value="NADH_UbQ_OxRdtase_su1_CS"/>
</dbReference>
<dbReference type="NCBIfam" id="NF004741">
    <property type="entry name" value="PRK06076.1-2"/>
    <property type="match status" value="1"/>
</dbReference>
<dbReference type="NCBIfam" id="NF004745">
    <property type="entry name" value="PRK06076.1-6"/>
    <property type="match status" value="1"/>
</dbReference>
<dbReference type="PANTHER" id="PTHR11432">
    <property type="entry name" value="NADH DEHYDROGENASE SUBUNIT 1"/>
    <property type="match status" value="1"/>
</dbReference>
<dbReference type="PANTHER" id="PTHR11432:SF3">
    <property type="entry name" value="NADH-UBIQUINONE OXIDOREDUCTASE CHAIN 1"/>
    <property type="match status" value="1"/>
</dbReference>
<dbReference type="Pfam" id="PF00146">
    <property type="entry name" value="NADHdh"/>
    <property type="match status" value="1"/>
</dbReference>
<dbReference type="PROSITE" id="PS00668">
    <property type="entry name" value="COMPLEX1_ND1_2"/>
    <property type="match status" value="1"/>
</dbReference>
<feature type="chain" id="PRO_0000244903" description="NADH-quinone oxidoreductase subunit H">
    <location>
        <begin position="1"/>
        <end position="347"/>
    </location>
</feature>
<feature type="transmembrane region" description="Helical" evidence="1">
    <location>
        <begin position="13"/>
        <end position="33"/>
    </location>
</feature>
<feature type="transmembrane region" description="Helical" evidence="1">
    <location>
        <begin position="82"/>
        <end position="102"/>
    </location>
</feature>
<feature type="transmembrane region" description="Helical" evidence="1">
    <location>
        <begin position="115"/>
        <end position="135"/>
    </location>
</feature>
<feature type="transmembrane region" description="Helical" evidence="1">
    <location>
        <begin position="161"/>
        <end position="181"/>
    </location>
</feature>
<feature type="transmembrane region" description="Helical" evidence="1">
    <location>
        <begin position="198"/>
        <end position="218"/>
    </location>
</feature>
<feature type="transmembrane region" description="Helical" evidence="1">
    <location>
        <begin position="248"/>
        <end position="268"/>
    </location>
</feature>
<feature type="transmembrane region" description="Helical" evidence="1">
    <location>
        <begin position="286"/>
        <end position="306"/>
    </location>
</feature>
<feature type="transmembrane region" description="Helical" evidence="1">
    <location>
        <begin position="325"/>
        <end position="345"/>
    </location>
</feature>
<evidence type="ECO:0000255" key="1">
    <source>
        <dbReference type="HAMAP-Rule" id="MF_01350"/>
    </source>
</evidence>
<evidence type="ECO:0000305" key="2"/>